<keyword id="KW-1003">Cell membrane</keyword>
<keyword id="KW-0472">Membrane</keyword>
<keyword id="KW-0812">Transmembrane</keyword>
<keyword id="KW-1133">Transmembrane helix</keyword>
<feature type="chain" id="PRO_5000209655" description="UPF0182 protein Mkms_1433">
    <location>
        <begin position="1"/>
        <end position="1003"/>
    </location>
</feature>
<feature type="transmembrane region" description="Helical" evidence="1">
    <location>
        <begin position="18"/>
        <end position="38"/>
    </location>
</feature>
<feature type="transmembrane region" description="Helical" evidence="1">
    <location>
        <begin position="63"/>
        <end position="83"/>
    </location>
</feature>
<feature type="transmembrane region" description="Helical" evidence="1">
    <location>
        <begin position="114"/>
        <end position="134"/>
    </location>
</feature>
<feature type="transmembrane region" description="Helical" evidence="1">
    <location>
        <begin position="176"/>
        <end position="196"/>
    </location>
</feature>
<feature type="transmembrane region" description="Helical" evidence="1">
    <location>
        <begin position="211"/>
        <end position="231"/>
    </location>
</feature>
<feature type="transmembrane region" description="Helical" evidence="1">
    <location>
        <begin position="260"/>
        <end position="280"/>
    </location>
</feature>
<feature type="transmembrane region" description="Helical" evidence="1">
    <location>
        <begin position="288"/>
        <end position="308"/>
    </location>
</feature>
<feature type="region of interest" description="Disordered" evidence="2">
    <location>
        <begin position="902"/>
        <end position="979"/>
    </location>
</feature>
<feature type="compositionally biased region" description="Low complexity" evidence="2">
    <location>
        <begin position="902"/>
        <end position="937"/>
    </location>
</feature>
<comment type="subcellular location">
    <subcellularLocation>
        <location evidence="1">Cell membrane</location>
        <topology evidence="1">Multi-pass membrane protein</topology>
    </subcellularLocation>
</comment>
<comment type="similarity">
    <text evidence="1">Belongs to the UPF0182 family.</text>
</comment>
<proteinExistence type="inferred from homology"/>
<protein>
    <recommendedName>
        <fullName evidence="1">UPF0182 protein Mkms_1433</fullName>
    </recommendedName>
</protein>
<accession>A1UCT7</accession>
<dbReference type="EMBL" id="CP000518">
    <property type="protein sequence ID" value="ABL90645.1"/>
    <property type="molecule type" value="Genomic_DNA"/>
</dbReference>
<dbReference type="SMR" id="A1UCT7"/>
<dbReference type="STRING" id="189918.Mkms_1433"/>
<dbReference type="KEGG" id="mkm:Mkms_1433"/>
<dbReference type="HOGENOM" id="CLU_007733_1_0_11"/>
<dbReference type="OrthoDB" id="9763654at2"/>
<dbReference type="GO" id="GO:0005576">
    <property type="term" value="C:extracellular region"/>
    <property type="evidence" value="ECO:0007669"/>
    <property type="project" value="TreeGrafter"/>
</dbReference>
<dbReference type="GO" id="GO:0005886">
    <property type="term" value="C:plasma membrane"/>
    <property type="evidence" value="ECO:0007669"/>
    <property type="project" value="UniProtKB-SubCell"/>
</dbReference>
<dbReference type="HAMAP" id="MF_01600">
    <property type="entry name" value="UPF0182"/>
    <property type="match status" value="1"/>
</dbReference>
<dbReference type="InterPro" id="IPR005372">
    <property type="entry name" value="UPF0182"/>
</dbReference>
<dbReference type="NCBIfam" id="NF000825">
    <property type="entry name" value="PRK00068.1"/>
    <property type="match status" value="1"/>
</dbReference>
<dbReference type="NCBIfam" id="NF009097">
    <property type="entry name" value="PRK12438.1"/>
    <property type="match status" value="1"/>
</dbReference>
<dbReference type="PANTHER" id="PTHR39344">
    <property type="entry name" value="UPF0182 PROTEIN SLL1060"/>
    <property type="match status" value="1"/>
</dbReference>
<dbReference type="PANTHER" id="PTHR39344:SF1">
    <property type="entry name" value="UPF0182 PROTEIN SLL1060"/>
    <property type="match status" value="1"/>
</dbReference>
<dbReference type="Pfam" id="PF03699">
    <property type="entry name" value="UPF0182"/>
    <property type="match status" value="1"/>
</dbReference>
<name>Y1433_MYCSK</name>
<evidence type="ECO:0000255" key="1">
    <source>
        <dbReference type="HAMAP-Rule" id="MF_01600"/>
    </source>
</evidence>
<evidence type="ECO:0000256" key="2">
    <source>
        <dbReference type="SAM" id="MobiDB-lite"/>
    </source>
</evidence>
<gene>
    <name type="ordered locus">Mkms_1433</name>
</gene>
<organism>
    <name type="scientific">Mycobacterium sp. (strain KMS)</name>
    <dbReference type="NCBI Taxonomy" id="189918"/>
    <lineage>
        <taxon>Bacteria</taxon>
        <taxon>Bacillati</taxon>
        <taxon>Actinomycetota</taxon>
        <taxon>Actinomycetes</taxon>
        <taxon>Mycobacteriales</taxon>
        <taxon>Mycobacteriaceae</taxon>
        <taxon>Mycobacterium</taxon>
    </lineage>
</organism>
<sequence length="1003" mass="109402">MGMRPPARMPKLTRRSRVLIGVALAAVVLLLIGPRFIDTYVNWLWFGELGYRSVFTTVLLTRVVVFLVVSLLIGAIVFAGLALAYRTRPVFVPTAGPNDPIARYRTTVMARLRLFGFGVPAFIGILSGIVAQSYWVRIQLFLHGGEFGVTDPQFGLDLGFYAFDLPFYRLVLSYLFVATFLAFIANLLGHYLFGGIRLTGRNGALTRSARIQLVTLVGILILLKAFAYWLDRYELLSHTRGGKPFTGAGYTDINAVLPAKLILLAIAVICAVAVFSAIVLRDLRIPAIGVVLLLLSSLVVGAGWPLVVEQFSVKPNAAQKESEYISRSIAATRQAYGLTDEVVTYRDYPGNAPATAQQVAADRSTTSNIRVLDPNIVSPAFTQFQQGKNFYFFPEQLAMDRYRDADGNLRDYVVAARELNPDRLIDNQRDWINRHTVYTHGNGFIASPANTVRGIANDPNQNGGYPEFLASVVGANGAVVSPGPAPLDQPRIYFGPVIANTASDYAIVGENGTPREYDYENNVETRNYTYTGSGGVPIGNWLTRSLFAAKFAERNFLFSNVIGENSKILFNRDPADRVEAVAPWLTTDTTVYPAIVNKKIVWIVDGYTTLDNYPYSELTSLSSATADSNEVAVNRLALNKQVSYIRNSVKATVDAYDGTVTLYAQDETDPVLQAWMKVFPDTIKPKSEISPELQQHLRYPEDLFKVQRALLAKYHVDDPVTFFSTSDFWDVPLDPNPTASSFQPPYYIVAKDLAENNNSAAFQLTSAMNRFRRDFLAAYMSASSDPETYGKITVLTIPGQVNGPKLAFNAISTDTAVSQDLGVIGRDNQNRIRWGNLLTLPVGPGGLLYVAPVYASPGTSDAASTYPRLIRVAMFYNDQVGYGPTVRDALTDLFGAGADATATGPAPANLPDGQPAAQPPNGQQPAAQTPGNQAGRAPTPPPAAIPSGPSGPQQLSEAKAAALQEVQEAMSGLQDAQRSGNFAEYGEALQRLDDAMNRYSEAR</sequence>
<reference key="1">
    <citation type="submission" date="2006-12" db="EMBL/GenBank/DDBJ databases">
        <title>Complete sequence of chromosome of Mycobacterium sp. KMS.</title>
        <authorList>
            <consortium name="US DOE Joint Genome Institute"/>
            <person name="Copeland A."/>
            <person name="Lucas S."/>
            <person name="Lapidus A."/>
            <person name="Barry K."/>
            <person name="Detter J.C."/>
            <person name="Glavina del Rio T."/>
            <person name="Hammon N."/>
            <person name="Israni S."/>
            <person name="Dalin E."/>
            <person name="Tice H."/>
            <person name="Pitluck S."/>
            <person name="Kiss H."/>
            <person name="Brettin T."/>
            <person name="Bruce D."/>
            <person name="Han C."/>
            <person name="Tapia R."/>
            <person name="Gilna P."/>
            <person name="Schmutz J."/>
            <person name="Larimer F."/>
            <person name="Land M."/>
            <person name="Hauser L."/>
            <person name="Kyrpides N."/>
            <person name="Mikhailova N."/>
            <person name="Miller C.D."/>
            <person name="Richardson P."/>
        </authorList>
    </citation>
    <scope>NUCLEOTIDE SEQUENCE [LARGE SCALE GENOMIC DNA]</scope>
    <source>
        <strain>KMS</strain>
    </source>
</reference>